<comment type="function">
    <text evidence="1">Involved in gonadal development.</text>
</comment>
<comment type="subunit">
    <text evidence="1">Interacts with LDB1 and LDB2.</text>
</comment>
<comment type="subcellular location">
    <subcellularLocation>
        <location evidence="2">Nucleus</location>
    </subcellularLocation>
</comment>
<comment type="alternative products">
    <event type="alternative splicing"/>
    <isoform>
        <id>A0JNI8-1</id>
        <name>1</name>
        <sequence type="displayed"/>
    </isoform>
    <isoform>
        <id>A0JNI8-2</id>
        <name>2</name>
        <sequence type="described" ref="VSP_036427"/>
    </isoform>
</comment>
<name>LHX9_BOVIN</name>
<sequence length="397" mass="43889">MEIVGCRAEDSSCPFRPPAMLFHGISGGHIQGIMEEMERRSKSEARLAKGAQLNGRDAGMPPLSPEKPALCAGCGGKIADRYYLLAVDKQWHLRCLKCCECKLALESELTCFAKDGSIYCKEDYYRRFSVQRCARCHLGISASEMVMRARDSVYHLSCFTCSTCNKTLTTGDHFGMKDSLVYCRAHFETLLQGEYPPQLSYTELAAKSGGLALPYFNGTGTVQKGRPRKRKSPALGVDIVNYNSGCNENEADHLDRDQQPYPPSQKTKRMRTSFKHHQLRTMKSYFAINHNPDAKDLKQLAQKTGLTKRVLQVWFQNARAKFRRNLLRQENGGVDKADGTSLPAPPSADSGALSPPGTATTLTDLTNPSITVVTAVTSNMDSHESASPSQTTLTNLF</sequence>
<proteinExistence type="evidence at transcript level"/>
<evidence type="ECO:0000250" key="1"/>
<evidence type="ECO:0000255" key="2">
    <source>
        <dbReference type="PROSITE-ProRule" id="PRU00108"/>
    </source>
</evidence>
<evidence type="ECO:0000255" key="3">
    <source>
        <dbReference type="PROSITE-ProRule" id="PRU00125"/>
    </source>
</evidence>
<evidence type="ECO:0000256" key="4">
    <source>
        <dbReference type="SAM" id="MobiDB-lite"/>
    </source>
</evidence>
<evidence type="ECO:0000303" key="5">
    <source ref="2"/>
</evidence>
<feature type="chain" id="PRO_0000278839" description="LIM/homeobox protein Lhx9">
    <location>
        <begin position="1"/>
        <end position="397"/>
    </location>
</feature>
<feature type="domain" description="LIM zinc-binding 1" evidence="3">
    <location>
        <begin position="69"/>
        <end position="130"/>
    </location>
</feature>
<feature type="domain" description="LIM zinc-binding 2" evidence="3">
    <location>
        <begin position="131"/>
        <end position="193"/>
    </location>
</feature>
<feature type="DNA-binding region" description="Homeobox" evidence="2">
    <location>
        <begin position="267"/>
        <end position="326"/>
    </location>
</feature>
<feature type="region of interest" description="Disordered" evidence="4">
    <location>
        <begin position="248"/>
        <end position="272"/>
    </location>
</feature>
<feature type="region of interest" description="Disordered" evidence="4">
    <location>
        <begin position="330"/>
        <end position="364"/>
    </location>
</feature>
<feature type="splice variant" id="VSP_036427" description="In isoform 2." evidence="5">
    <original>MEIVGCRAEDSSCPFRPP</original>
    <variation>MLNGTTLEA</variation>
    <location>
        <begin position="1"/>
        <end position="18"/>
    </location>
</feature>
<reference key="1">
    <citation type="journal article" date="2005" name="BMC Genomics">
        <title>Characterization of 954 bovine full-CDS cDNA sequences.</title>
        <authorList>
            <person name="Harhay G.P."/>
            <person name="Sonstegard T.S."/>
            <person name="Keele J.W."/>
            <person name="Heaton M.P."/>
            <person name="Clawson M.L."/>
            <person name="Snelling W.M."/>
            <person name="Wiedmann R.T."/>
            <person name="Van Tassell C.P."/>
            <person name="Smith T.P.L."/>
        </authorList>
    </citation>
    <scope>NUCLEOTIDE SEQUENCE [LARGE SCALE MRNA] (ISOFORM 1)</scope>
</reference>
<reference key="2">
    <citation type="submission" date="2006-10" db="EMBL/GenBank/DDBJ databases">
        <authorList>
            <consortium name="NIH - Mammalian Gene Collection (MGC) project"/>
        </authorList>
    </citation>
    <scope>NUCLEOTIDE SEQUENCE [LARGE SCALE MRNA] (ISOFORM 2)</scope>
    <source>
        <strain>Hereford</strain>
        <tissue>Hypothalamus</tissue>
    </source>
</reference>
<accession>A0JNI8</accession>
<accession>Q0V893</accession>
<gene>
    <name type="primary">LHX9</name>
</gene>
<dbReference type="EMBL" id="BT026326">
    <property type="protein sequence ID" value="ABG81482.1"/>
    <property type="molecule type" value="mRNA"/>
</dbReference>
<dbReference type="EMBL" id="BC126704">
    <property type="protein sequence ID" value="AAI26705.1"/>
    <property type="molecule type" value="mRNA"/>
</dbReference>
<dbReference type="RefSeq" id="XP_010811854.1">
    <molecule id="A0JNI8-1"/>
    <property type="nucleotide sequence ID" value="XM_010813552.4"/>
</dbReference>
<dbReference type="RefSeq" id="XP_015330757.1">
    <molecule id="A0JNI8-2"/>
    <property type="nucleotide sequence ID" value="XM_015475271.3"/>
</dbReference>
<dbReference type="BMRB" id="A0JNI8"/>
<dbReference type="SMR" id="A0JNI8"/>
<dbReference type="FunCoup" id="A0JNI8">
    <property type="interactions" value="349"/>
</dbReference>
<dbReference type="STRING" id="9913.ENSBTAP00000041150"/>
<dbReference type="PaxDb" id="9913-ENSBTAP00000041150"/>
<dbReference type="Ensembl" id="ENSBTAT00000043591.5">
    <molecule id="A0JNI8-1"/>
    <property type="protein sequence ID" value="ENSBTAP00000041150.5"/>
    <property type="gene ID" value="ENSBTAG00000013499.7"/>
</dbReference>
<dbReference type="GeneID" id="515012"/>
<dbReference type="CTD" id="56956"/>
<dbReference type="eggNOG" id="KOG0490">
    <property type="taxonomic scope" value="Eukaryota"/>
</dbReference>
<dbReference type="InParanoid" id="A0JNI8"/>
<dbReference type="OrthoDB" id="9990008at2759"/>
<dbReference type="TreeFam" id="TF315442"/>
<dbReference type="Proteomes" id="UP000009136">
    <property type="component" value="Chromosome 16"/>
</dbReference>
<dbReference type="GO" id="GO:0005634">
    <property type="term" value="C:nucleus"/>
    <property type="evidence" value="ECO:0000318"/>
    <property type="project" value="GO_Central"/>
</dbReference>
<dbReference type="GO" id="GO:0000981">
    <property type="term" value="F:DNA-binding transcription factor activity, RNA polymerase II-specific"/>
    <property type="evidence" value="ECO:0000318"/>
    <property type="project" value="GO_Central"/>
</dbReference>
<dbReference type="GO" id="GO:0046872">
    <property type="term" value="F:metal ion binding"/>
    <property type="evidence" value="ECO:0007669"/>
    <property type="project" value="UniProtKB-KW"/>
</dbReference>
<dbReference type="GO" id="GO:0000977">
    <property type="term" value="F:RNA polymerase II transcription regulatory region sequence-specific DNA binding"/>
    <property type="evidence" value="ECO:0000318"/>
    <property type="project" value="GO_Central"/>
</dbReference>
<dbReference type="GO" id="GO:0008283">
    <property type="term" value="P:cell population proliferation"/>
    <property type="evidence" value="ECO:0007669"/>
    <property type="project" value="Ensembl"/>
</dbReference>
<dbReference type="GO" id="GO:0097380">
    <property type="term" value="P:dorsal spinal cord interneuron anterior axon guidance"/>
    <property type="evidence" value="ECO:0000250"/>
    <property type="project" value="UniProtKB"/>
</dbReference>
<dbReference type="GO" id="GO:0008585">
    <property type="term" value="P:female gonad development"/>
    <property type="evidence" value="ECO:0007669"/>
    <property type="project" value="Ensembl"/>
</dbReference>
<dbReference type="GO" id="GO:0035262">
    <property type="term" value="P:gonad morphogenesis"/>
    <property type="evidence" value="ECO:0007669"/>
    <property type="project" value="Ensembl"/>
</dbReference>
<dbReference type="GO" id="GO:0008584">
    <property type="term" value="P:male gonad development"/>
    <property type="evidence" value="ECO:0007669"/>
    <property type="project" value="Ensembl"/>
</dbReference>
<dbReference type="GO" id="GO:0045892">
    <property type="term" value="P:negative regulation of DNA-templated transcription"/>
    <property type="evidence" value="ECO:0000250"/>
    <property type="project" value="UniProtKB"/>
</dbReference>
<dbReference type="GO" id="GO:0030182">
    <property type="term" value="P:neuron differentiation"/>
    <property type="evidence" value="ECO:0000318"/>
    <property type="project" value="GO_Central"/>
</dbReference>
<dbReference type="GO" id="GO:0006357">
    <property type="term" value="P:regulation of transcription by RNA polymerase II"/>
    <property type="evidence" value="ECO:0000318"/>
    <property type="project" value="GO_Central"/>
</dbReference>
<dbReference type="CDD" id="cd00086">
    <property type="entry name" value="homeodomain"/>
    <property type="match status" value="1"/>
</dbReference>
<dbReference type="CDD" id="cd09469">
    <property type="entry name" value="LIM1_Lhx2"/>
    <property type="match status" value="1"/>
</dbReference>
<dbReference type="CDD" id="cd09377">
    <property type="entry name" value="LIM2_Lhx2_Lhx9"/>
    <property type="match status" value="1"/>
</dbReference>
<dbReference type="FunFam" id="1.10.10.60:FF:000027">
    <property type="entry name" value="LIM/homeobox protein Lhx9"/>
    <property type="match status" value="1"/>
</dbReference>
<dbReference type="FunFam" id="2.10.110.10:FF:000039">
    <property type="entry name" value="LIM/homeobox protein Lhx9 isoform 2"/>
    <property type="match status" value="1"/>
</dbReference>
<dbReference type="FunFam" id="2.10.110.10:FF:000033">
    <property type="entry name" value="LIM/homeobox protein Lhx9 isoform X2"/>
    <property type="match status" value="1"/>
</dbReference>
<dbReference type="Gene3D" id="2.10.110.10">
    <property type="entry name" value="Cysteine Rich Protein"/>
    <property type="match status" value="2"/>
</dbReference>
<dbReference type="Gene3D" id="1.10.10.60">
    <property type="entry name" value="Homeodomain-like"/>
    <property type="match status" value="1"/>
</dbReference>
<dbReference type="InterPro" id="IPR001356">
    <property type="entry name" value="HD"/>
</dbReference>
<dbReference type="InterPro" id="IPR017970">
    <property type="entry name" value="Homeobox_CS"/>
</dbReference>
<dbReference type="InterPro" id="IPR009057">
    <property type="entry name" value="Homeodomain-like_sf"/>
</dbReference>
<dbReference type="InterPro" id="IPR050453">
    <property type="entry name" value="LIM_Homeobox_TF"/>
</dbReference>
<dbReference type="InterPro" id="IPR001781">
    <property type="entry name" value="Znf_LIM"/>
</dbReference>
<dbReference type="PANTHER" id="PTHR24208">
    <property type="entry name" value="LIM/HOMEOBOX PROTEIN LHX"/>
    <property type="match status" value="1"/>
</dbReference>
<dbReference type="PANTHER" id="PTHR24208:SF95">
    <property type="entry name" value="LIM_HOMEOBOX PROTEIN LHX9"/>
    <property type="match status" value="1"/>
</dbReference>
<dbReference type="Pfam" id="PF00046">
    <property type="entry name" value="Homeodomain"/>
    <property type="match status" value="1"/>
</dbReference>
<dbReference type="Pfam" id="PF00412">
    <property type="entry name" value="LIM"/>
    <property type="match status" value="2"/>
</dbReference>
<dbReference type="SMART" id="SM00389">
    <property type="entry name" value="HOX"/>
    <property type="match status" value="1"/>
</dbReference>
<dbReference type="SMART" id="SM00132">
    <property type="entry name" value="LIM"/>
    <property type="match status" value="2"/>
</dbReference>
<dbReference type="SUPFAM" id="SSF57716">
    <property type="entry name" value="Glucocorticoid receptor-like (DNA-binding domain)"/>
    <property type="match status" value="2"/>
</dbReference>
<dbReference type="SUPFAM" id="SSF46689">
    <property type="entry name" value="Homeodomain-like"/>
    <property type="match status" value="1"/>
</dbReference>
<dbReference type="PROSITE" id="PS00027">
    <property type="entry name" value="HOMEOBOX_1"/>
    <property type="match status" value="1"/>
</dbReference>
<dbReference type="PROSITE" id="PS50071">
    <property type="entry name" value="HOMEOBOX_2"/>
    <property type="match status" value="1"/>
</dbReference>
<dbReference type="PROSITE" id="PS00478">
    <property type="entry name" value="LIM_DOMAIN_1"/>
    <property type="match status" value="2"/>
</dbReference>
<dbReference type="PROSITE" id="PS50023">
    <property type="entry name" value="LIM_DOMAIN_2"/>
    <property type="match status" value="2"/>
</dbReference>
<protein>
    <recommendedName>
        <fullName>LIM/homeobox protein Lhx9</fullName>
        <shortName>LIM homeobox protein 9</shortName>
    </recommendedName>
</protein>
<keyword id="KW-0025">Alternative splicing</keyword>
<keyword id="KW-0238">DNA-binding</keyword>
<keyword id="KW-0371">Homeobox</keyword>
<keyword id="KW-0440">LIM domain</keyword>
<keyword id="KW-0479">Metal-binding</keyword>
<keyword id="KW-0539">Nucleus</keyword>
<keyword id="KW-1185">Reference proteome</keyword>
<keyword id="KW-0677">Repeat</keyword>
<keyword id="KW-0862">Zinc</keyword>
<organism>
    <name type="scientific">Bos taurus</name>
    <name type="common">Bovine</name>
    <dbReference type="NCBI Taxonomy" id="9913"/>
    <lineage>
        <taxon>Eukaryota</taxon>
        <taxon>Metazoa</taxon>
        <taxon>Chordata</taxon>
        <taxon>Craniata</taxon>
        <taxon>Vertebrata</taxon>
        <taxon>Euteleostomi</taxon>
        <taxon>Mammalia</taxon>
        <taxon>Eutheria</taxon>
        <taxon>Laurasiatheria</taxon>
        <taxon>Artiodactyla</taxon>
        <taxon>Ruminantia</taxon>
        <taxon>Pecora</taxon>
        <taxon>Bovidae</taxon>
        <taxon>Bovinae</taxon>
        <taxon>Bos</taxon>
    </lineage>
</organism>